<comment type="catalytic activity">
    <reaction evidence="2">
        <text>(S)-lactate + NAD(+) = pyruvate + NADH + H(+)</text>
        <dbReference type="Rhea" id="RHEA:23444"/>
        <dbReference type="ChEBI" id="CHEBI:15361"/>
        <dbReference type="ChEBI" id="CHEBI:15378"/>
        <dbReference type="ChEBI" id="CHEBI:16651"/>
        <dbReference type="ChEBI" id="CHEBI:57540"/>
        <dbReference type="ChEBI" id="CHEBI:57945"/>
        <dbReference type="EC" id="1.1.1.27"/>
    </reaction>
</comment>
<comment type="pathway">
    <text>Fermentation; pyruvate fermentation to lactate; (S)-lactate from pyruvate: step 1/1.</text>
</comment>
<comment type="subunit">
    <text evidence="2">Homotetramer.</text>
</comment>
<comment type="similarity">
    <text evidence="3">Belongs to the LDH/MDH superfamily. LDH family.</text>
</comment>
<feature type="chain" id="PRO_0000227538" description="L-lactate dehydrogenase" evidence="4">
    <location>
        <begin position="1"/>
        <end position="316"/>
    </location>
</feature>
<feature type="active site" description="Proton acceptor" evidence="2">
    <location>
        <position position="182"/>
    </location>
</feature>
<feature type="binding site" evidence="2">
    <location>
        <begin position="13"/>
        <end position="15"/>
    </location>
    <ligand>
        <name>NAD(+)</name>
        <dbReference type="ChEBI" id="CHEBI:57540"/>
    </ligand>
</feature>
<feature type="binding site" evidence="2">
    <location>
        <begin position="34"/>
        <end position="36"/>
    </location>
    <ligand>
        <name>NAD(+)</name>
        <dbReference type="ChEBI" id="CHEBI:57540"/>
    </ligand>
</feature>
<feature type="binding site" evidence="2">
    <location>
        <position position="67"/>
    </location>
    <ligand>
        <name>NAD(+)</name>
        <dbReference type="ChEBI" id="CHEBI:57540"/>
    </ligand>
</feature>
<feature type="binding site" evidence="2">
    <location>
        <begin position="79"/>
        <end position="83"/>
    </location>
    <ligand>
        <name>NAD(+)</name>
        <dbReference type="ChEBI" id="CHEBI:57540"/>
    </ligand>
</feature>
<feature type="binding site" evidence="2">
    <location>
        <position position="95"/>
    </location>
    <ligand>
        <name>substrate</name>
    </ligand>
</feature>
<feature type="binding site" evidence="2">
    <location>
        <begin position="125"/>
        <end position="127"/>
    </location>
    <ligand>
        <name>NAD(+)</name>
        <dbReference type="ChEBI" id="CHEBI:57540"/>
    </ligand>
</feature>
<feature type="binding site" evidence="1">
    <location>
        <position position="150"/>
    </location>
    <ligand>
        <name>NAD(+)</name>
        <dbReference type="ChEBI" id="CHEBI:57540"/>
    </ligand>
</feature>
<feature type="binding site" evidence="1">
    <location>
        <position position="154"/>
    </location>
    <ligand>
        <name>NAD(+)</name>
        <dbReference type="ChEBI" id="CHEBI:57540"/>
    </ligand>
</feature>
<feature type="binding site" evidence="2">
    <location>
        <position position="158"/>
    </location>
    <ligand>
        <name>substrate</name>
    </ligand>
</feature>
<feature type="binding site" evidence="2">
    <location>
        <position position="182"/>
    </location>
    <ligand>
        <name>NAD(+)</name>
        <dbReference type="ChEBI" id="CHEBI:57540"/>
    </ligand>
</feature>
<feature type="binding site" evidence="2">
    <location>
        <position position="182"/>
    </location>
    <ligand>
        <name>substrate</name>
    </ligand>
</feature>
<reference evidence="5" key="1">
    <citation type="submission" date="2003-10" db="EMBL/GenBank/DDBJ databases">
        <title>A screen for stage-specific gene expression in Plasmodium oocyst sporozoites.</title>
        <authorList>
            <person name="Matuschewski K."/>
            <person name="Brown S.M."/>
            <person name="Nussenzweig V."/>
            <person name="Kappe S.H.I."/>
        </authorList>
    </citation>
    <scope>NUCLEOTIDE SEQUENCE [GENOMIC DNA]</scope>
    <source>
        <strain evidence="5">NK65</strain>
    </source>
</reference>
<evidence type="ECO:0000250" key="1"/>
<evidence type="ECO:0000250" key="2">
    <source>
        <dbReference type="UniProtKB" id="Q7SI97"/>
    </source>
</evidence>
<evidence type="ECO:0000255" key="3"/>
<evidence type="ECO:0000305" key="4"/>
<evidence type="ECO:0000312" key="5">
    <source>
        <dbReference type="EMBL" id="AAR99063.1"/>
    </source>
</evidence>
<dbReference type="EC" id="1.1.1.27"/>
<dbReference type="EMBL" id="AY437808">
    <property type="protein sequence ID" value="AAR99063.1"/>
    <property type="molecule type" value="Genomic_DNA"/>
</dbReference>
<dbReference type="SMR" id="P84793"/>
<dbReference type="VEuPathDB" id="PlasmoDB:PBANKA_1340100"/>
<dbReference type="OMA" id="EGQYGHK"/>
<dbReference type="OrthoDB" id="5405561at2759"/>
<dbReference type="UniPathway" id="UPA00554">
    <property type="reaction ID" value="UER00611"/>
</dbReference>
<dbReference type="GO" id="GO:0004459">
    <property type="term" value="F:L-lactate dehydrogenase activity"/>
    <property type="evidence" value="ECO:0007669"/>
    <property type="project" value="UniProtKB-EC"/>
</dbReference>
<dbReference type="GO" id="GO:0006089">
    <property type="term" value="P:lactate metabolic process"/>
    <property type="evidence" value="ECO:0007669"/>
    <property type="project" value="TreeGrafter"/>
</dbReference>
<dbReference type="CDD" id="cd01339">
    <property type="entry name" value="LDH-like_MDH"/>
    <property type="match status" value="1"/>
</dbReference>
<dbReference type="FunFam" id="3.40.50.720:FF:000362">
    <property type="entry name" value="L-lactate dehydrogenase"/>
    <property type="match status" value="1"/>
</dbReference>
<dbReference type="Gene3D" id="3.90.110.10">
    <property type="entry name" value="Lactate dehydrogenase/glycoside hydrolase, family 4, C-terminal"/>
    <property type="match status" value="1"/>
</dbReference>
<dbReference type="Gene3D" id="3.40.50.720">
    <property type="entry name" value="NAD(P)-binding Rossmann-like Domain"/>
    <property type="match status" value="1"/>
</dbReference>
<dbReference type="InterPro" id="IPR001557">
    <property type="entry name" value="L-lactate/malate_DH"/>
</dbReference>
<dbReference type="InterPro" id="IPR022383">
    <property type="entry name" value="Lactate/malate_DH_C"/>
</dbReference>
<dbReference type="InterPro" id="IPR001236">
    <property type="entry name" value="Lactate/malate_DH_N"/>
</dbReference>
<dbReference type="InterPro" id="IPR015955">
    <property type="entry name" value="Lactate_DH/Glyco_Ohase_4_C"/>
</dbReference>
<dbReference type="InterPro" id="IPR011275">
    <property type="entry name" value="Malate_DH_type3"/>
</dbReference>
<dbReference type="InterPro" id="IPR036291">
    <property type="entry name" value="NAD(P)-bd_dom_sf"/>
</dbReference>
<dbReference type="NCBIfam" id="NF004863">
    <property type="entry name" value="PRK06223.1"/>
    <property type="match status" value="1"/>
</dbReference>
<dbReference type="PANTHER" id="PTHR43128">
    <property type="entry name" value="L-2-HYDROXYCARBOXYLATE DEHYDROGENASE (NAD(P)(+))"/>
    <property type="match status" value="1"/>
</dbReference>
<dbReference type="PANTHER" id="PTHR43128:SF16">
    <property type="entry name" value="L-LACTATE DEHYDROGENASE"/>
    <property type="match status" value="1"/>
</dbReference>
<dbReference type="Pfam" id="PF02866">
    <property type="entry name" value="Ldh_1_C"/>
    <property type="match status" value="1"/>
</dbReference>
<dbReference type="Pfam" id="PF00056">
    <property type="entry name" value="Ldh_1_N"/>
    <property type="match status" value="1"/>
</dbReference>
<dbReference type="PIRSF" id="PIRSF000102">
    <property type="entry name" value="Lac_mal_DH"/>
    <property type="match status" value="1"/>
</dbReference>
<dbReference type="PRINTS" id="PR00086">
    <property type="entry name" value="LLDHDRGNASE"/>
</dbReference>
<dbReference type="SUPFAM" id="SSF56327">
    <property type="entry name" value="LDH C-terminal domain-like"/>
    <property type="match status" value="1"/>
</dbReference>
<dbReference type="SUPFAM" id="SSF51735">
    <property type="entry name" value="NAD(P)-binding Rossmann-fold domains"/>
    <property type="match status" value="1"/>
</dbReference>
<protein>
    <recommendedName>
        <fullName>L-lactate dehydrogenase</fullName>
        <ecNumber>1.1.1.27</ecNumber>
    </recommendedName>
</protein>
<organism>
    <name type="scientific">Plasmodium berghei</name>
    <dbReference type="NCBI Taxonomy" id="5821"/>
    <lineage>
        <taxon>Eukaryota</taxon>
        <taxon>Sar</taxon>
        <taxon>Alveolata</taxon>
        <taxon>Apicomplexa</taxon>
        <taxon>Aconoidasida</taxon>
        <taxon>Haemosporida</taxon>
        <taxon>Plasmodiidae</taxon>
        <taxon>Plasmodium</taxon>
        <taxon>Plasmodium (Vinckeia)</taxon>
    </lineage>
</organism>
<name>LDH_PLABE</name>
<sequence length="316" mass="34424">MAPKAKIVLVGSGMIGGVMATLIVQKNLGDVVMFDIVKNMPHGKALDTSHTNVMAYSNCKVSGSNTYDDLKDADVVIVTAGFTKAPGKSDKEWNRDDLLPLNNKIMIEIGGHIKNNCPNAFIIVVTNPVDVMVQLLHQHSGVPKNKIVGLGGVLDTSRLKYYISQKLNVCPRDVNAHIVGAHGNKMVLLKRYITVGGIPLQEFINNKKITDQELDAIFDRTINTALEIVNLHASPYVAPAAAIIEMAESYIRDLRKVLICSTLLEGQYGHKDIFAGTPLVIGGNGVEQVIELQLNADEKKKFDEAVAETSRMKALI</sequence>
<accession>P84793</accession>
<accession>Q4Z783</accession>
<proteinExistence type="inferred from homology"/>
<keyword id="KW-0520">NAD</keyword>
<keyword id="KW-0560">Oxidoreductase</keyword>
<keyword id="KW-0670">Pyruvate</keyword>